<protein>
    <recommendedName>
        <fullName>ATP synthase gamma chain</fullName>
    </recommendedName>
    <alternativeName>
        <fullName>ATP synthase F1 sector gamma subunit</fullName>
    </alternativeName>
    <alternativeName>
        <fullName>F-ATPase gamma subunit</fullName>
    </alternativeName>
</protein>
<reference key="1">
    <citation type="journal article" date="1995" name="Biochim. Biophys. Acta">
        <title>Sequence of the gamma-subunit of Spirulina platensis: a new principle of thiol modulation of F0F1 ATP synthase?</title>
        <authorList>
            <person name="Steinemann D."/>
            <person name="Lill H."/>
        </authorList>
    </citation>
    <scope>NUCLEOTIDE SEQUENCE [GENOMIC DNA]</scope>
    <scope>PROTEIN SEQUENCE OF 2-15</scope>
    <source>
        <strain>C1</strain>
    </source>
</reference>
<proteinExistence type="evidence at protein level"/>
<keyword id="KW-0066">ATP synthesis</keyword>
<keyword id="KW-0139">CF(1)</keyword>
<keyword id="KW-0903">Direct protein sequencing</keyword>
<keyword id="KW-1015">Disulfide bond</keyword>
<keyword id="KW-0375">Hydrogen ion transport</keyword>
<keyword id="KW-0406">Ion transport</keyword>
<keyword id="KW-0472">Membrane</keyword>
<keyword id="KW-0793">Thylakoid</keyword>
<keyword id="KW-0813">Transport</keyword>
<dbReference type="EMBL" id="Z46799">
    <property type="protein sequence ID" value="CAA86820.1"/>
    <property type="molecule type" value="Genomic_DNA"/>
</dbReference>
<dbReference type="PIR" id="S49845">
    <property type="entry name" value="S49845"/>
</dbReference>
<dbReference type="SMR" id="P50006"/>
<dbReference type="GO" id="GO:0031676">
    <property type="term" value="C:plasma membrane-derived thylakoid membrane"/>
    <property type="evidence" value="ECO:0007669"/>
    <property type="project" value="UniProtKB-SubCell"/>
</dbReference>
<dbReference type="GO" id="GO:0045259">
    <property type="term" value="C:proton-transporting ATP synthase complex"/>
    <property type="evidence" value="ECO:0007669"/>
    <property type="project" value="UniProtKB-KW"/>
</dbReference>
<dbReference type="GO" id="GO:0005524">
    <property type="term" value="F:ATP binding"/>
    <property type="evidence" value="ECO:0007669"/>
    <property type="project" value="UniProtKB-UniRule"/>
</dbReference>
<dbReference type="GO" id="GO:0046933">
    <property type="term" value="F:proton-transporting ATP synthase activity, rotational mechanism"/>
    <property type="evidence" value="ECO:0007669"/>
    <property type="project" value="UniProtKB-UniRule"/>
</dbReference>
<dbReference type="CDD" id="cd12151">
    <property type="entry name" value="F1-ATPase_gamma"/>
    <property type="match status" value="1"/>
</dbReference>
<dbReference type="FunFam" id="3.40.1380.10:FF:000006">
    <property type="entry name" value="ATP synthase gamma chain"/>
    <property type="match status" value="1"/>
</dbReference>
<dbReference type="FunFam" id="1.10.287.80:FF:000003">
    <property type="entry name" value="ATP synthase gamma chain, chloroplastic"/>
    <property type="match status" value="1"/>
</dbReference>
<dbReference type="FunFam" id="1.10.287.80:FF:000004">
    <property type="entry name" value="ATP synthase gamma chain, chloroplastic"/>
    <property type="match status" value="1"/>
</dbReference>
<dbReference type="Gene3D" id="3.40.1380.10">
    <property type="match status" value="1"/>
</dbReference>
<dbReference type="Gene3D" id="1.10.287.80">
    <property type="entry name" value="ATP synthase, gamma subunit, helix hairpin domain"/>
    <property type="match status" value="2"/>
</dbReference>
<dbReference type="HAMAP" id="MF_00815">
    <property type="entry name" value="ATP_synth_gamma_bact"/>
    <property type="match status" value="1"/>
</dbReference>
<dbReference type="InterPro" id="IPR035968">
    <property type="entry name" value="ATP_synth_F1_ATPase_gsu"/>
</dbReference>
<dbReference type="InterPro" id="IPR000131">
    <property type="entry name" value="ATP_synth_F1_gsu"/>
</dbReference>
<dbReference type="NCBIfam" id="TIGR01146">
    <property type="entry name" value="ATPsyn_F1gamma"/>
    <property type="match status" value="1"/>
</dbReference>
<dbReference type="NCBIfam" id="NF004145">
    <property type="entry name" value="PRK05621.1-2"/>
    <property type="match status" value="1"/>
</dbReference>
<dbReference type="PANTHER" id="PTHR11693">
    <property type="entry name" value="ATP SYNTHASE GAMMA CHAIN"/>
    <property type="match status" value="1"/>
</dbReference>
<dbReference type="PANTHER" id="PTHR11693:SF41">
    <property type="entry name" value="ATP SYNTHASE GAMMA CHAIN, CHLOROPLASTIC"/>
    <property type="match status" value="1"/>
</dbReference>
<dbReference type="Pfam" id="PF00231">
    <property type="entry name" value="ATP-synt"/>
    <property type="match status" value="1"/>
</dbReference>
<dbReference type="PRINTS" id="PR00126">
    <property type="entry name" value="ATPASEGAMMA"/>
</dbReference>
<dbReference type="SUPFAM" id="SSF52943">
    <property type="entry name" value="ATP synthase (F1-ATPase), gamma subunit"/>
    <property type="match status" value="1"/>
</dbReference>
<organism>
    <name type="scientific">Arthrospira platensis</name>
    <name type="common">Spirulina platensis</name>
    <dbReference type="NCBI Taxonomy" id="118562"/>
    <lineage>
        <taxon>Bacteria</taxon>
        <taxon>Bacillati</taxon>
        <taxon>Cyanobacteriota</taxon>
        <taxon>Cyanophyceae</taxon>
        <taxon>Oscillatoriophycideae</taxon>
        <taxon>Oscillatoriales</taxon>
        <taxon>Microcoleaceae</taxon>
        <taxon>Arthrospira</taxon>
    </lineage>
</organism>
<feature type="initiator methionine" description="Removed" evidence="3">
    <location>
        <position position="1"/>
    </location>
</feature>
<feature type="chain" id="PRO_0000073372" description="ATP synthase gamma chain">
    <location>
        <begin position="2"/>
        <end position="311"/>
    </location>
</feature>
<feature type="disulfide bond" evidence="2">
    <location>
        <begin position="67"/>
        <end position="138"/>
    </location>
</feature>
<gene>
    <name type="primary">atpG</name>
    <name type="synonym">atpC</name>
</gene>
<sequence length="311" mass="34492">MSNLKAIRDRIQSVKNTKKITEAMRLVASAKVRRAQEQVLATRPFADRLAGVLYGLQGRLQFEDVECPLLQQREVKKVGLVVLAGNRGLCGAYNSNIIKRAEARAAELKAEGLEYSYLLVGRKAIQHFTRRDAPISQCRDNPEKTPDPQEVSSATDEILAWFESGAVDRVELIYTKFVSLISSRPVTQTLLPLDLQGLEAQDDEVFRLTSKGGKFDVTREKVSVEPEALAQDMIFEQDPVEILNALLPLFLTNQLLRAWQESTASELAARMTAMSNASDNASDLVKTLTLSYNKARQASITQELLEVVAGA</sequence>
<accession>P50006</accession>
<comment type="function">
    <text evidence="1">Produces ATP from ADP in the presence of a proton gradient across the membrane. The gamma chain is believed to be important in regulating ATPase activity and the flow of protons through the CF(0) complex (By similarity).</text>
</comment>
<comment type="activity regulation">
    <text>Thiol-modulation by raising the activation threshold of the enzyme upon oxidation of the cysteines, thereby preventing wasteful ATP-hydrolysis.</text>
</comment>
<comment type="subunit">
    <text evidence="1">F-type ATPases have 2 components, CF(1) - the catalytic core - and CF(0) - the membrane proton channel. CF(1) has five subunits: alpha(3), beta(3), gamma(1), delta(1), epsilon(1). CF(0) has three main subunits: a, b and c (By similarity).</text>
</comment>
<comment type="subcellular location">
    <subcellularLocation>
        <location evidence="1">Cellular thylakoid membrane</location>
        <topology evidence="1">Peripheral membrane protein</topology>
    </subcellularLocation>
</comment>
<comment type="similarity">
    <text evidence="4">Belongs to the ATPase gamma chain family.</text>
</comment>
<evidence type="ECO:0000250" key="1"/>
<evidence type="ECO:0000255" key="2"/>
<evidence type="ECO:0000269" key="3">
    <source>
    </source>
</evidence>
<evidence type="ECO:0000305" key="4"/>
<name>ATPG_ARTPT</name>